<protein>
    <recommendedName>
        <fullName evidence="1">Thiazole synthase</fullName>
        <ecNumber evidence="1">2.8.1.10</ecNumber>
    </recommendedName>
</protein>
<organism>
    <name type="scientific">Aliivibrio salmonicida (strain LFI1238)</name>
    <name type="common">Vibrio salmonicida (strain LFI1238)</name>
    <dbReference type="NCBI Taxonomy" id="316275"/>
    <lineage>
        <taxon>Bacteria</taxon>
        <taxon>Pseudomonadati</taxon>
        <taxon>Pseudomonadota</taxon>
        <taxon>Gammaproteobacteria</taxon>
        <taxon>Vibrionales</taxon>
        <taxon>Vibrionaceae</taxon>
        <taxon>Aliivibrio</taxon>
    </lineage>
</organism>
<name>THIG_ALISL</name>
<comment type="function">
    <text evidence="1">Catalyzes the rearrangement of 1-deoxy-D-xylulose 5-phosphate (DXP) to produce the thiazole phosphate moiety of thiamine. Sulfur is provided by the thiocarboxylate moiety of the carrier protein ThiS. In vitro, sulfur can be provided by H(2)S.</text>
</comment>
<comment type="catalytic activity">
    <reaction evidence="1">
        <text>[ThiS sulfur-carrier protein]-C-terminal-Gly-aminoethanethioate + 2-iminoacetate + 1-deoxy-D-xylulose 5-phosphate = [ThiS sulfur-carrier protein]-C-terminal Gly-Gly + 2-[(2R,5Z)-2-carboxy-4-methylthiazol-5(2H)-ylidene]ethyl phosphate + 2 H2O + H(+)</text>
        <dbReference type="Rhea" id="RHEA:26297"/>
        <dbReference type="Rhea" id="RHEA-COMP:12909"/>
        <dbReference type="Rhea" id="RHEA-COMP:19908"/>
        <dbReference type="ChEBI" id="CHEBI:15377"/>
        <dbReference type="ChEBI" id="CHEBI:15378"/>
        <dbReference type="ChEBI" id="CHEBI:57792"/>
        <dbReference type="ChEBI" id="CHEBI:62899"/>
        <dbReference type="ChEBI" id="CHEBI:77846"/>
        <dbReference type="ChEBI" id="CHEBI:90778"/>
        <dbReference type="ChEBI" id="CHEBI:232372"/>
        <dbReference type="EC" id="2.8.1.10"/>
    </reaction>
</comment>
<comment type="pathway">
    <text evidence="1">Cofactor biosynthesis; thiamine diphosphate biosynthesis.</text>
</comment>
<comment type="subunit">
    <text evidence="1">Homotetramer. Forms heterodimers with either ThiH or ThiS.</text>
</comment>
<comment type="subcellular location">
    <subcellularLocation>
        <location evidence="1">Cytoplasm</location>
    </subcellularLocation>
</comment>
<comment type="similarity">
    <text evidence="1">Belongs to the ThiG family.</text>
</comment>
<proteinExistence type="inferred from homology"/>
<reference key="1">
    <citation type="journal article" date="2008" name="BMC Genomics">
        <title>The genome sequence of the fish pathogen Aliivibrio salmonicida strain LFI1238 shows extensive evidence of gene decay.</title>
        <authorList>
            <person name="Hjerde E."/>
            <person name="Lorentzen M.S."/>
            <person name="Holden M.T."/>
            <person name="Seeger K."/>
            <person name="Paulsen S."/>
            <person name="Bason N."/>
            <person name="Churcher C."/>
            <person name="Harris D."/>
            <person name="Norbertczak H."/>
            <person name="Quail M.A."/>
            <person name="Sanders S."/>
            <person name="Thurston S."/>
            <person name="Parkhill J."/>
            <person name="Willassen N.P."/>
            <person name="Thomson N.R."/>
        </authorList>
    </citation>
    <scope>NUCLEOTIDE SEQUENCE [LARGE SCALE GENOMIC DNA]</scope>
    <source>
        <strain>LFI1238</strain>
    </source>
</reference>
<keyword id="KW-0963">Cytoplasm</keyword>
<keyword id="KW-0704">Schiff base</keyword>
<keyword id="KW-0784">Thiamine biosynthesis</keyword>
<keyword id="KW-0808">Transferase</keyword>
<evidence type="ECO:0000255" key="1">
    <source>
        <dbReference type="HAMAP-Rule" id="MF_00443"/>
    </source>
</evidence>
<accession>B6EGV5</accession>
<dbReference type="EC" id="2.8.1.10" evidence="1"/>
<dbReference type="EMBL" id="FM178379">
    <property type="protein sequence ID" value="CAQ80671.1"/>
    <property type="molecule type" value="Genomic_DNA"/>
</dbReference>
<dbReference type="RefSeq" id="WP_012551388.1">
    <property type="nucleotide sequence ID" value="NC_011312.1"/>
</dbReference>
<dbReference type="SMR" id="B6EGV5"/>
<dbReference type="KEGG" id="vsa:VSAL_I2987"/>
<dbReference type="eggNOG" id="COG2022">
    <property type="taxonomic scope" value="Bacteria"/>
</dbReference>
<dbReference type="HOGENOM" id="CLU_062233_1_0_6"/>
<dbReference type="UniPathway" id="UPA00060"/>
<dbReference type="Proteomes" id="UP000001730">
    <property type="component" value="Chromosome 1"/>
</dbReference>
<dbReference type="GO" id="GO:0005737">
    <property type="term" value="C:cytoplasm"/>
    <property type="evidence" value="ECO:0007669"/>
    <property type="project" value="UniProtKB-SubCell"/>
</dbReference>
<dbReference type="GO" id="GO:1990107">
    <property type="term" value="F:thiazole synthase activity"/>
    <property type="evidence" value="ECO:0007669"/>
    <property type="project" value="UniProtKB-EC"/>
</dbReference>
<dbReference type="GO" id="GO:0009229">
    <property type="term" value="P:thiamine diphosphate biosynthetic process"/>
    <property type="evidence" value="ECO:0007669"/>
    <property type="project" value="UniProtKB-UniRule"/>
</dbReference>
<dbReference type="CDD" id="cd04728">
    <property type="entry name" value="ThiG"/>
    <property type="match status" value="1"/>
</dbReference>
<dbReference type="FunFam" id="3.20.20.70:FF:000049">
    <property type="entry name" value="Thiazole synthase"/>
    <property type="match status" value="1"/>
</dbReference>
<dbReference type="Gene3D" id="3.20.20.70">
    <property type="entry name" value="Aldolase class I"/>
    <property type="match status" value="1"/>
</dbReference>
<dbReference type="HAMAP" id="MF_00443">
    <property type="entry name" value="ThiG"/>
    <property type="match status" value="1"/>
</dbReference>
<dbReference type="InterPro" id="IPR013785">
    <property type="entry name" value="Aldolase_TIM"/>
</dbReference>
<dbReference type="InterPro" id="IPR033983">
    <property type="entry name" value="Thiazole_synthase_ThiG"/>
</dbReference>
<dbReference type="InterPro" id="IPR008867">
    <property type="entry name" value="ThiG"/>
</dbReference>
<dbReference type="PANTHER" id="PTHR34266">
    <property type="entry name" value="THIAZOLE SYNTHASE"/>
    <property type="match status" value="1"/>
</dbReference>
<dbReference type="PANTHER" id="PTHR34266:SF2">
    <property type="entry name" value="THIAZOLE SYNTHASE"/>
    <property type="match status" value="1"/>
</dbReference>
<dbReference type="Pfam" id="PF05690">
    <property type="entry name" value="ThiG"/>
    <property type="match status" value="1"/>
</dbReference>
<dbReference type="SUPFAM" id="SSF110399">
    <property type="entry name" value="ThiG-like"/>
    <property type="match status" value="1"/>
</dbReference>
<gene>
    <name evidence="1" type="primary">thiG</name>
    <name type="ordered locus">VSAL_I2987</name>
</gene>
<sequence>MTQPLIIANTPFSSRLFTGTGKFPNSLIMQQALIESGSELATMALKRVDVSNPEDDILKPIMTAGINLLPNTSGAKNAREAIFAAQLAREALQTNWLKLEIHPDPKYLMPDPIETLKAAEELVRQGFIVLPYCHADPVLCKRLEEVGCAAVMPLGAPIGSNKGIVSRDFLEIIIDQAKVPVVVDAGIGAPSHAAFAMELGADAVLVNTAIAAARNPVAMATAFKLAVQSGRLAYENGLVSVSSQAVASSPLTAFLD</sequence>
<feature type="chain" id="PRO_1000124594" description="Thiazole synthase">
    <location>
        <begin position="1"/>
        <end position="256"/>
    </location>
</feature>
<feature type="active site" description="Schiff-base intermediate with DXP" evidence="1">
    <location>
        <position position="98"/>
    </location>
</feature>
<feature type="binding site" evidence="1">
    <location>
        <position position="159"/>
    </location>
    <ligand>
        <name>1-deoxy-D-xylulose 5-phosphate</name>
        <dbReference type="ChEBI" id="CHEBI:57792"/>
    </ligand>
</feature>
<feature type="binding site" evidence="1">
    <location>
        <begin position="185"/>
        <end position="186"/>
    </location>
    <ligand>
        <name>1-deoxy-D-xylulose 5-phosphate</name>
        <dbReference type="ChEBI" id="CHEBI:57792"/>
    </ligand>
</feature>
<feature type="binding site" evidence="1">
    <location>
        <begin position="207"/>
        <end position="208"/>
    </location>
    <ligand>
        <name>1-deoxy-D-xylulose 5-phosphate</name>
        <dbReference type="ChEBI" id="CHEBI:57792"/>
    </ligand>
</feature>